<gene>
    <name type="primary">hspG5</name>
    <name type="ORF">DDB_G0276875</name>
</gene>
<comment type="induction">
    <text evidence="3">Down-regulated by Pseudomonas aeruginosa, PAO1 strain and PA14 strain infection.</text>
</comment>
<comment type="similarity">
    <text evidence="1">Belongs to the small heat shock protein (HSP20) family.</text>
</comment>
<organism>
    <name type="scientific">Dictyostelium discoideum</name>
    <name type="common">Social amoeba</name>
    <dbReference type="NCBI Taxonomy" id="44689"/>
    <lineage>
        <taxon>Eukaryota</taxon>
        <taxon>Amoebozoa</taxon>
        <taxon>Evosea</taxon>
        <taxon>Eumycetozoa</taxon>
        <taxon>Dictyostelia</taxon>
        <taxon>Dictyosteliales</taxon>
        <taxon>Dictyosteliaceae</taxon>
        <taxon>Dictyostelium</taxon>
    </lineage>
</organism>
<sequence>MATLFDILNTLNNNNYFENCKRQCSINKSNKTIIDIIPPMDVTMTNDKLIIETELAGISKDHIEIDIKDSILTIQGEKKKNLNKQQQQLVIEKSTTSSTTLDSKEDEASIEEFEDDIKPKSKSTVTTTATKENKEDENKTKLSDKKFISERSFGNFKRYLDLTKVLYQLDLNSINTQFENGLLTITINKKLHYSNTIKININ</sequence>
<name>HSPG5_DICDI</name>
<protein>
    <recommendedName>
        <fullName>Small heat shock protein hspG5</fullName>
    </recommendedName>
</protein>
<evidence type="ECO:0000255" key="1">
    <source>
        <dbReference type="PROSITE-ProRule" id="PRU00285"/>
    </source>
</evidence>
<evidence type="ECO:0000256" key="2">
    <source>
        <dbReference type="SAM" id="MobiDB-lite"/>
    </source>
</evidence>
<evidence type="ECO:0000269" key="3">
    <source>
    </source>
</evidence>
<feature type="chain" id="PRO_0000363897" description="Small heat shock protein hspG5">
    <location>
        <begin position="1"/>
        <end position="202"/>
    </location>
</feature>
<feature type="domain" description="sHSP" evidence="1">
    <location>
        <begin position="31"/>
        <end position="202"/>
    </location>
</feature>
<feature type="region of interest" description="Disordered" evidence="2">
    <location>
        <begin position="96"/>
        <end position="138"/>
    </location>
</feature>
<dbReference type="EMBL" id="AAFI02000019">
    <property type="protein sequence ID" value="EAL68939.1"/>
    <property type="molecule type" value="Genomic_DNA"/>
</dbReference>
<dbReference type="RefSeq" id="XP_642979.1">
    <property type="nucleotide sequence ID" value="XM_637887.1"/>
</dbReference>
<dbReference type="SMR" id="Q8MPA7"/>
<dbReference type="STRING" id="44689.Q8MPA7"/>
<dbReference type="PaxDb" id="44689-DDB0232126"/>
<dbReference type="EnsemblProtists" id="EAL68939">
    <property type="protein sequence ID" value="EAL68939"/>
    <property type="gene ID" value="DDB_G0276875"/>
</dbReference>
<dbReference type="GeneID" id="8620851"/>
<dbReference type="KEGG" id="ddi:DDB_G0276875"/>
<dbReference type="dictyBase" id="DDB_G0276875">
    <property type="gene designation" value="hspG5"/>
</dbReference>
<dbReference type="VEuPathDB" id="AmoebaDB:DDB_G0276875"/>
<dbReference type="eggNOG" id="KOG0710">
    <property type="taxonomic scope" value="Eukaryota"/>
</dbReference>
<dbReference type="HOGENOM" id="CLU_1328489_0_0_1"/>
<dbReference type="InParanoid" id="Q8MPA7"/>
<dbReference type="OMA" id="QCSINKS"/>
<dbReference type="PhylomeDB" id="Q8MPA7"/>
<dbReference type="PRO" id="PR:Q8MPA7"/>
<dbReference type="Proteomes" id="UP000002195">
    <property type="component" value="Chromosome 2"/>
</dbReference>
<dbReference type="CDD" id="cd06464">
    <property type="entry name" value="ACD_sHsps-like"/>
    <property type="match status" value="1"/>
</dbReference>
<dbReference type="Gene3D" id="2.60.40.790">
    <property type="match status" value="1"/>
</dbReference>
<dbReference type="InterPro" id="IPR002068">
    <property type="entry name" value="A-crystallin/Hsp20_dom"/>
</dbReference>
<dbReference type="InterPro" id="IPR008978">
    <property type="entry name" value="HSP20-like_chaperone"/>
</dbReference>
<dbReference type="InterPro" id="IPR051779">
    <property type="entry name" value="HspG1-11-like"/>
</dbReference>
<dbReference type="PANTHER" id="PTHR46827">
    <property type="entry name" value="HEAT SHOCK PROTEIN DDB_G0288861-RELATED"/>
    <property type="match status" value="1"/>
</dbReference>
<dbReference type="PANTHER" id="PTHR46827:SF1">
    <property type="entry name" value="HEAT SHOCK PROTEIN DDB_G0288861-RELATED"/>
    <property type="match status" value="1"/>
</dbReference>
<dbReference type="Pfam" id="PF00011">
    <property type="entry name" value="HSP20"/>
    <property type="match status" value="1"/>
</dbReference>
<dbReference type="SUPFAM" id="SSF49764">
    <property type="entry name" value="HSP20-like chaperones"/>
    <property type="match status" value="1"/>
</dbReference>
<dbReference type="PROSITE" id="PS01031">
    <property type="entry name" value="SHSP"/>
    <property type="match status" value="1"/>
</dbReference>
<reference key="1">
    <citation type="journal article" date="2002" name="Nature">
        <title>Sequence and analysis of chromosome 2 of Dictyostelium discoideum.</title>
        <authorList>
            <person name="Gloeckner G."/>
            <person name="Eichinger L."/>
            <person name="Szafranski K."/>
            <person name="Pachebat J.A."/>
            <person name="Bankier A.T."/>
            <person name="Dear P.H."/>
            <person name="Lehmann R."/>
            <person name="Baumgart C."/>
            <person name="Parra G."/>
            <person name="Abril J.F."/>
            <person name="Guigo R."/>
            <person name="Kumpf K."/>
            <person name="Tunggal B."/>
            <person name="Cox E.C."/>
            <person name="Quail M.A."/>
            <person name="Platzer M."/>
            <person name="Rosenthal A."/>
            <person name="Noegel A.A."/>
        </authorList>
    </citation>
    <scope>NUCLEOTIDE SEQUENCE [LARGE SCALE GENOMIC DNA]</scope>
    <source>
        <strain>AX4</strain>
    </source>
</reference>
<reference key="2">
    <citation type="journal article" date="2005" name="Nature">
        <title>The genome of the social amoeba Dictyostelium discoideum.</title>
        <authorList>
            <person name="Eichinger L."/>
            <person name="Pachebat J.A."/>
            <person name="Gloeckner G."/>
            <person name="Rajandream M.A."/>
            <person name="Sucgang R."/>
            <person name="Berriman M."/>
            <person name="Song J."/>
            <person name="Olsen R."/>
            <person name="Szafranski K."/>
            <person name="Xu Q."/>
            <person name="Tunggal B."/>
            <person name="Kummerfeld S."/>
            <person name="Madera M."/>
            <person name="Konfortov B.A."/>
            <person name="Rivero F."/>
            <person name="Bankier A.T."/>
            <person name="Lehmann R."/>
            <person name="Hamlin N."/>
            <person name="Davies R."/>
            <person name="Gaudet P."/>
            <person name="Fey P."/>
            <person name="Pilcher K."/>
            <person name="Chen G."/>
            <person name="Saunders D."/>
            <person name="Sodergren E.J."/>
            <person name="Davis P."/>
            <person name="Kerhornou A."/>
            <person name="Nie X."/>
            <person name="Hall N."/>
            <person name="Anjard C."/>
            <person name="Hemphill L."/>
            <person name="Bason N."/>
            <person name="Farbrother P."/>
            <person name="Desany B."/>
            <person name="Just E."/>
            <person name="Morio T."/>
            <person name="Rost R."/>
            <person name="Churcher C.M."/>
            <person name="Cooper J."/>
            <person name="Haydock S."/>
            <person name="van Driessche N."/>
            <person name="Cronin A."/>
            <person name="Goodhead I."/>
            <person name="Muzny D.M."/>
            <person name="Mourier T."/>
            <person name="Pain A."/>
            <person name="Lu M."/>
            <person name="Harper D."/>
            <person name="Lindsay R."/>
            <person name="Hauser H."/>
            <person name="James K.D."/>
            <person name="Quiles M."/>
            <person name="Madan Babu M."/>
            <person name="Saito T."/>
            <person name="Buchrieser C."/>
            <person name="Wardroper A."/>
            <person name="Felder M."/>
            <person name="Thangavelu M."/>
            <person name="Johnson D."/>
            <person name="Knights A."/>
            <person name="Loulseged H."/>
            <person name="Mungall K.L."/>
            <person name="Oliver K."/>
            <person name="Price C."/>
            <person name="Quail M.A."/>
            <person name="Urushihara H."/>
            <person name="Hernandez J."/>
            <person name="Rabbinowitsch E."/>
            <person name="Steffen D."/>
            <person name="Sanders M."/>
            <person name="Ma J."/>
            <person name="Kohara Y."/>
            <person name="Sharp S."/>
            <person name="Simmonds M.N."/>
            <person name="Spiegler S."/>
            <person name="Tivey A."/>
            <person name="Sugano S."/>
            <person name="White B."/>
            <person name="Walker D."/>
            <person name="Woodward J.R."/>
            <person name="Winckler T."/>
            <person name="Tanaka Y."/>
            <person name="Shaulsky G."/>
            <person name="Schleicher M."/>
            <person name="Weinstock G.M."/>
            <person name="Rosenthal A."/>
            <person name="Cox E.C."/>
            <person name="Chisholm R.L."/>
            <person name="Gibbs R.A."/>
            <person name="Loomis W.F."/>
            <person name="Platzer M."/>
            <person name="Kay R.R."/>
            <person name="Williams J.G."/>
            <person name="Dear P.H."/>
            <person name="Noegel A.A."/>
            <person name="Barrell B.G."/>
            <person name="Kuspa A."/>
        </authorList>
    </citation>
    <scope>NUCLEOTIDE SEQUENCE [LARGE SCALE GENOMIC DNA]</scope>
    <source>
        <strain>AX4</strain>
    </source>
</reference>
<reference key="3">
    <citation type="journal article" date="2008" name="BMC Microbiol.">
        <title>Dictyostelium transcriptional responses to Pseudomonas aeruginosa: common and specific effects from PAO1 and PA14 strains.</title>
        <authorList>
            <person name="Carilla-Latorre S."/>
            <person name="Calvo-Garrido J."/>
            <person name="Bloomfield G."/>
            <person name="Skelton J."/>
            <person name="Kay R.R."/>
            <person name="Ivens A."/>
            <person name="Martinez J.L."/>
            <person name="Escalante R."/>
        </authorList>
    </citation>
    <scope>INDUCTION [LARGE SCALE ANALYSIS]</scope>
</reference>
<keyword id="KW-1185">Reference proteome</keyword>
<keyword id="KW-0346">Stress response</keyword>
<proteinExistence type="evidence at transcript level"/>
<accession>Q8MPA7</accession>
<accession>Q550F3</accession>